<gene>
    <name evidence="22" type="primary">SLC1A5</name>
    <name evidence="23" type="synonym">ASCT2</name>
    <name type="synonym">M7V1</name>
    <name type="synonym">RDR</name>
    <name type="synonym">RDRC</name>
</gene>
<protein>
    <recommendedName>
        <fullName>Neutral amino acid transporter B(0)</fullName>
        <shortName>ATB(0)</shortName>
    </recommendedName>
    <alternativeName>
        <fullName>Baboon M7 virus receptor</fullName>
    </alternativeName>
    <alternativeName>
        <fullName>RD114/simian type D retrovirus receptor</fullName>
    </alternativeName>
    <alternativeName>
        <fullName>Sodium-dependent neutral amino acid transporter type 2</fullName>
    </alternativeName>
    <alternativeName>
        <fullName>Solute carrier family 1 member 5</fullName>
    </alternativeName>
</protein>
<organism>
    <name type="scientific">Homo sapiens</name>
    <name type="common">Human</name>
    <dbReference type="NCBI Taxonomy" id="9606"/>
    <lineage>
        <taxon>Eukaryota</taxon>
        <taxon>Metazoa</taxon>
        <taxon>Chordata</taxon>
        <taxon>Craniata</taxon>
        <taxon>Vertebrata</taxon>
        <taxon>Euteleostomi</taxon>
        <taxon>Mammalia</taxon>
        <taxon>Eutheria</taxon>
        <taxon>Euarchontoglires</taxon>
        <taxon>Primates</taxon>
        <taxon>Haplorrhini</taxon>
        <taxon>Catarrhini</taxon>
        <taxon>Hominidae</taxon>
        <taxon>Homo</taxon>
    </lineage>
</organism>
<keyword id="KW-0002">3D-structure</keyword>
<keyword id="KW-0007">Acetylation</keyword>
<keyword id="KW-0024">Alternative initiation</keyword>
<keyword id="KW-0025">Alternative splicing</keyword>
<keyword id="KW-0029">Amino-acid transport</keyword>
<keyword id="KW-0050">Antiport</keyword>
<keyword id="KW-1003">Cell membrane</keyword>
<keyword id="KW-0325">Glycoprotein</keyword>
<keyword id="KW-1183">Host cell receptor for virus entry</keyword>
<keyword id="KW-0945">Host-virus interaction</keyword>
<keyword id="KW-0472">Membrane</keyword>
<keyword id="KW-0479">Metal-binding</keyword>
<keyword id="KW-0597">Phosphoprotein</keyword>
<keyword id="KW-1267">Proteomics identification</keyword>
<keyword id="KW-0675">Receptor</keyword>
<keyword id="KW-1185">Reference proteome</keyword>
<keyword id="KW-0915">Sodium</keyword>
<keyword id="KW-0769">Symport</keyword>
<keyword id="KW-0812">Transmembrane</keyword>
<keyword id="KW-1133">Transmembrane helix</keyword>
<keyword id="KW-0813">Transport</keyword>
<name>AAAT_HUMAN</name>
<proteinExistence type="evidence at protein level"/>
<evidence type="ECO:0000250" key="1">
    <source>
        <dbReference type="UniProtKB" id="D3ZJ25"/>
    </source>
</evidence>
<evidence type="ECO:0000250" key="2">
    <source>
        <dbReference type="UniProtKB" id="O59010"/>
    </source>
</evidence>
<evidence type="ECO:0000250" key="3">
    <source>
        <dbReference type="UniProtKB" id="P43003"/>
    </source>
</evidence>
<evidence type="ECO:0000255" key="4"/>
<evidence type="ECO:0000256" key="5">
    <source>
        <dbReference type="SAM" id="MobiDB-lite"/>
    </source>
</evidence>
<evidence type="ECO:0000269" key="6">
    <source>
    </source>
</evidence>
<evidence type="ECO:0000269" key="7">
    <source>
    </source>
</evidence>
<evidence type="ECO:0000269" key="8">
    <source>
    </source>
</evidence>
<evidence type="ECO:0000269" key="9">
    <source>
    </source>
</evidence>
<evidence type="ECO:0000269" key="10">
    <source>
    </source>
</evidence>
<evidence type="ECO:0000269" key="11">
    <source>
    </source>
</evidence>
<evidence type="ECO:0000269" key="12">
    <source>
    </source>
</evidence>
<evidence type="ECO:0000269" key="13">
    <source>
    </source>
</evidence>
<evidence type="ECO:0000269" key="14">
    <source>
    </source>
</evidence>
<evidence type="ECO:0000269" key="15">
    <source>
    </source>
</evidence>
<evidence type="ECO:0000269" key="16">
    <source>
    </source>
</evidence>
<evidence type="ECO:0000269" key="17">
    <source>
    </source>
</evidence>
<evidence type="ECO:0000269" key="18">
    <source>
    </source>
</evidence>
<evidence type="ECO:0000269" key="19">
    <source>
    </source>
</evidence>
<evidence type="ECO:0000269" key="20">
    <source>
    </source>
</evidence>
<evidence type="ECO:0000303" key="21">
    <source>
    </source>
</evidence>
<evidence type="ECO:0000303" key="22">
    <source>
    </source>
</evidence>
<evidence type="ECO:0000303" key="23">
    <source ref="4"/>
</evidence>
<evidence type="ECO:0000305" key="24"/>
<evidence type="ECO:0000305" key="25">
    <source>
    </source>
</evidence>
<evidence type="ECO:0000305" key="26">
    <source>
    </source>
</evidence>
<evidence type="ECO:0007744" key="27">
    <source>
    </source>
</evidence>
<evidence type="ECO:0007744" key="28">
    <source>
    </source>
</evidence>
<evidence type="ECO:0007744" key="29">
    <source>
    </source>
</evidence>
<evidence type="ECO:0007744" key="30">
    <source>
    </source>
</evidence>
<evidence type="ECO:0007744" key="31">
    <source>
    </source>
</evidence>
<evidence type="ECO:0007744" key="32">
    <source>
    </source>
</evidence>
<evidence type="ECO:0007744" key="33">
    <source>
    </source>
</evidence>
<evidence type="ECO:0007744" key="34">
    <source>
    </source>
</evidence>
<evidence type="ECO:0007829" key="35">
    <source>
        <dbReference type="PDB" id="7BCT"/>
    </source>
</evidence>
<evidence type="ECO:0007829" key="36">
    <source>
        <dbReference type="PDB" id="8OUD"/>
    </source>
</evidence>
<evidence type="ECO:0007829" key="37">
    <source>
        <dbReference type="PDB" id="8OUH"/>
    </source>
</evidence>
<comment type="function">
    <text evidence="1 8 11 13 14 15 16 17 18 19 20">Sodium-coupled antiporter of neutral amino acids. In a tri-substrate transport cycle, exchanges neutral amino acids between the extracellular and intracellular compartments, coupled to the inward cotransport of at least one sodium ion (PubMed:17094966, PubMed:23756778, PubMed:26492990, PubMed:29872227, PubMed:34741534, PubMed:8702519). The preferred substrate is the essential amino acid L-glutamine, a precursor for biosynthesis of proteins, nucleotides and amine sugars as well as an alternative fuel for mitochondrial oxidative phosphorylation. Exchanges L-glutamine with other neutral amino acids such as L-serine, L-threonine and L-asparagine in a bidirectional way. Provides L-glutamine to proliferating stem and activated cells driving the metabolic switch toward cell differentiation (PubMed:23756778, PubMed:24953180). The transport cycle is usually pH-independent, with the exception of L-glutamate. Transports extracellular L-glutamate coupled to the cotransport of one proton and one sodium ion in exchange for intracellular L-glutamine counter-ion. May provide for L-glutamate uptake in glial cells regulating glutamine/glutamate cycle in the nervous system (PubMed:32733894). Can transport D-amino acids. Mediates D-serine release from the retinal glia potentially affecting NMDA receptor function in retinal neurons (PubMed:17094966). Displays sodium- and amino acid-dependent but uncoupled channel-like anion conductance with a preference SCN(-) &gt;&gt; NO3(-) &gt; I(-) &gt; Cl(-) (By similarity). Through binding of the fusogenic protein syncytin-1/ERVW-1 may mediate trophoblasts syncytialization, the spontaneous fusion of their plasma membranes, an essential process in placental development (PubMed:10708449, PubMed:23492904).</text>
</comment>
<comment type="function">
    <text evidence="6 7">(Microbial infection) Acts as a cell surface receptor for Feline endogenous virus RD114.</text>
</comment>
<comment type="function">
    <text evidence="7">(Microbial infection) Acts as a cell surface receptor for Baboon M7 endogenous virus.</text>
</comment>
<comment type="function">
    <text evidence="7">(Microbial infection) Acts as a cell surface receptor for type D simian retroviruses.</text>
</comment>
<comment type="catalytic activity">
    <reaction evidence="14 17 19">
        <text>L-glutamine(out) + L-serine(in) + Na(+)(out) = L-glutamine(in) + L-serine(out) + Na(+)(in)</text>
        <dbReference type="Rhea" id="RHEA:70855"/>
        <dbReference type="ChEBI" id="CHEBI:29101"/>
        <dbReference type="ChEBI" id="CHEBI:33384"/>
        <dbReference type="ChEBI" id="CHEBI:58359"/>
    </reaction>
</comment>
<comment type="catalytic activity">
    <reaction evidence="14 18">
        <text>L-glutamine(in) + L-serine(out) + Na(+)(out) = L-glutamine(out) + L-serine(in) + Na(+)(in)</text>
        <dbReference type="Rhea" id="RHEA:70887"/>
        <dbReference type="ChEBI" id="CHEBI:29101"/>
        <dbReference type="ChEBI" id="CHEBI:33384"/>
        <dbReference type="ChEBI" id="CHEBI:58359"/>
    </reaction>
</comment>
<comment type="catalytic activity">
    <reaction evidence="14 16 17">
        <text>L-threonine(in) + L-glutamine(out) + Na(+)(out) = L-threonine(out) + L-glutamine(in) + Na(+)(in)</text>
        <dbReference type="Rhea" id="RHEA:70863"/>
        <dbReference type="ChEBI" id="CHEBI:29101"/>
        <dbReference type="ChEBI" id="CHEBI:57926"/>
        <dbReference type="ChEBI" id="CHEBI:58359"/>
    </reaction>
</comment>
<comment type="catalytic activity">
    <reaction evidence="16">
        <text>L-threonine(out) + L-glutamine(in) + Na(+)(out) = L-threonine(in) + L-glutamine(out) + Na(+)(in)</text>
        <dbReference type="Rhea" id="RHEA:70879"/>
        <dbReference type="ChEBI" id="CHEBI:29101"/>
        <dbReference type="ChEBI" id="CHEBI:57926"/>
        <dbReference type="ChEBI" id="CHEBI:58359"/>
    </reaction>
</comment>
<comment type="catalytic activity">
    <reaction evidence="14">
        <text>L-asparagine(in) + L-glutamine(out) + Na(+)(out) = L-asparagine(out) + L-glutamine(in) + Na(+)(in)</text>
        <dbReference type="Rhea" id="RHEA:70859"/>
        <dbReference type="ChEBI" id="CHEBI:29101"/>
        <dbReference type="ChEBI" id="CHEBI:58048"/>
        <dbReference type="ChEBI" id="CHEBI:58359"/>
    </reaction>
</comment>
<comment type="catalytic activity">
    <reaction evidence="14 17 18">
        <text>L-asparagine(out) + L-glutamine(in) + Na(+)(out) = L-asparagine(in) + L-glutamine(out) + Na(+)(in)</text>
        <dbReference type="Rhea" id="RHEA:70891"/>
        <dbReference type="ChEBI" id="CHEBI:29101"/>
        <dbReference type="ChEBI" id="CHEBI:58048"/>
        <dbReference type="ChEBI" id="CHEBI:58359"/>
    </reaction>
</comment>
<comment type="catalytic activity">
    <reaction evidence="14 17">
        <text>L-glutamine(in) + L-alanine(out) + Na(+)(out) = L-glutamine(out) + L-alanine(in) + Na(+)(in)</text>
        <dbReference type="Rhea" id="RHEA:70867"/>
        <dbReference type="ChEBI" id="CHEBI:29101"/>
        <dbReference type="ChEBI" id="CHEBI:57972"/>
        <dbReference type="ChEBI" id="CHEBI:58359"/>
    </reaction>
</comment>
<comment type="catalytic activity">
    <reaction evidence="14">
        <text>L-valine(out) + L-glutamine(in) + Na(+)(out) = L-valine(in) + L-glutamine(out) + Na(+)(in)</text>
        <dbReference type="Rhea" id="RHEA:70871"/>
        <dbReference type="ChEBI" id="CHEBI:29101"/>
        <dbReference type="ChEBI" id="CHEBI:57762"/>
        <dbReference type="ChEBI" id="CHEBI:58359"/>
    </reaction>
</comment>
<comment type="catalytic activity">
    <reaction evidence="14">
        <text>L-glutamine(in) + L-methionine(out) + Na(+)(out) = L-glutamine(out) + L-methionine(in) + Na(+)(in)</text>
        <dbReference type="Rhea" id="RHEA:70875"/>
        <dbReference type="ChEBI" id="CHEBI:29101"/>
        <dbReference type="ChEBI" id="CHEBI:57844"/>
        <dbReference type="ChEBI" id="CHEBI:58359"/>
    </reaction>
</comment>
<comment type="catalytic activity">
    <reaction evidence="18">
        <text>L-glutamine(in) + L-glutamate(out) + Na(+)(out) + H(+)(out) = L-glutamine(out) + L-glutamate(in) + Na(+)(in) + H(+)(in)</text>
        <dbReference type="Rhea" id="RHEA:70883"/>
        <dbReference type="ChEBI" id="CHEBI:15378"/>
        <dbReference type="ChEBI" id="CHEBI:29101"/>
        <dbReference type="ChEBI" id="CHEBI:29985"/>
        <dbReference type="ChEBI" id="CHEBI:58359"/>
    </reaction>
</comment>
<comment type="catalytic activity">
    <reaction evidence="11">
        <text>D-serine(in) + L-glutamine(out) + Na(+)(out) = D-serine(out) + L-glutamine(in) + Na(+)(in)</text>
        <dbReference type="Rhea" id="RHEA:75307"/>
        <dbReference type="ChEBI" id="CHEBI:29101"/>
        <dbReference type="ChEBI" id="CHEBI:35247"/>
        <dbReference type="ChEBI" id="CHEBI:58359"/>
    </reaction>
</comment>
<comment type="catalytic activity">
    <reaction evidence="11">
        <text>D-serine(in) + L-alanine(out) + Na(+)(out) = D-serine(out) + L-alanine(in) + Na(+)(in)</text>
        <dbReference type="Rhea" id="RHEA:75311"/>
        <dbReference type="ChEBI" id="CHEBI:29101"/>
        <dbReference type="ChEBI" id="CHEBI:35247"/>
        <dbReference type="ChEBI" id="CHEBI:57972"/>
    </reaction>
</comment>
<comment type="catalytic activity">
    <reaction evidence="1">
        <text>nitrate(in) = nitrate(out)</text>
        <dbReference type="Rhea" id="RHEA:34923"/>
        <dbReference type="ChEBI" id="CHEBI:17632"/>
    </reaction>
</comment>
<comment type="catalytic activity">
    <reaction evidence="1">
        <text>iodide(out) = iodide(in)</text>
        <dbReference type="Rhea" id="RHEA:66324"/>
        <dbReference type="ChEBI" id="CHEBI:16382"/>
    </reaction>
</comment>
<comment type="catalytic activity">
    <reaction evidence="1">
        <text>thiocyanate(in) = thiocyanate(out)</text>
        <dbReference type="Rhea" id="RHEA:75347"/>
        <dbReference type="ChEBI" id="CHEBI:18022"/>
    </reaction>
</comment>
<comment type="activity regulation">
    <text evidence="16">Regulated by L-cysteine, which can either inhibit substrate influx or trigger substrate efflux without being transported itself.</text>
</comment>
<comment type="biophysicochemical properties">
    <kinetics>
        <KM evidence="17">0.056 mM for L-glutamine(out)</KM>
        <KM evidence="14">0.097 mM for L-glutamine(out)</KM>
        <KM evidence="14">1.8 mM for L-glutamine(in)</KM>
        <KM evidence="14">32 mM for Na(+)(out)</KM>
        <KM evidence="17">16.5 mM for Na(+)(out)</KM>
        <Vmax evidence="14">13.3 nmol/min/mg enzyme toward L-glutamine(out)</Vmax>
        <Vmax evidence="14">12.0 nmol/min/mg enzyme toward L-glutamine(in)</Vmax>
        <Vmax evidence="14">11.5 nmol/min/mg enzyme toward Na(+)(out)</Vmax>
    </kinetics>
    <phDependence>
        <text evidence="14">Optimum pH is 7.</text>
    </phDependence>
</comment>
<comment type="subunit">
    <text evidence="13 17 25">Homotrimer (Probable) (PubMed:29872227). Interacts with ERVH48-1/suppressyn; may negatively regulate syncytialization (PubMed:23492904).</text>
</comment>
<comment type="interaction">
    <interactant intactId="EBI-356576">
        <id>Q15758</id>
    </interactant>
    <interactant intactId="EBI-11976321">
        <id>O95236-2</id>
        <label>APOL3</label>
    </interactant>
    <organismsDiffer>false</organismsDiffer>
    <experiments>3</experiments>
</comment>
<comment type="interaction">
    <interactant intactId="EBI-356576">
        <id>Q15758</id>
    </interactant>
    <interactant intactId="EBI-12188331">
        <id>P60201-2</id>
        <label>PLP1</label>
    </interactant>
    <organismsDiffer>false</organismsDiffer>
    <experiments>3</experiments>
</comment>
<comment type="interaction">
    <interactant intactId="EBI-356576">
        <id>Q15758</id>
    </interactant>
    <interactant intactId="EBI-348482">
        <id>Q99942</id>
        <label>RNF5</label>
    </interactant>
    <organismsDiffer>false</organismsDiffer>
    <experiments>4</experiments>
</comment>
<comment type="interaction">
    <interactant intactId="EBI-356576">
        <id>Q15758</id>
    </interactant>
    <interactant intactId="EBI-11988865">
        <id>A5PKU2</id>
        <label>TUSC5</label>
    </interactant>
    <organismsDiffer>false</organismsDiffer>
    <experiments>3</experiments>
</comment>
<comment type="subcellular location">
    <subcellularLocation>
        <location evidence="15 20 26">Cell membrane</location>
        <topology evidence="17">Multi-pass membrane protein</topology>
    </subcellularLocation>
    <subcellularLocation>
        <location>Melanosome</location>
    </subcellularLocation>
    <text>Identified by mass spectrometry in melanosome fractions from stage I to stage IV.</text>
</comment>
<comment type="alternative products">
    <event type="alternative splicing"/>
    <event type="alternative initiation"/>
    <isoform>
        <id>Q15758-1</id>
        <name>1</name>
        <sequence type="displayed"/>
    </isoform>
    <isoform>
        <id>Q15758-2</id>
        <name>2</name>
        <sequence type="described" ref="VSP_046354"/>
    </isoform>
    <isoform>
        <id>Q15758-3</id>
        <name>3</name>
        <sequence type="described" ref="VSP_046851"/>
    </isoform>
    <text evidence="9">A number of isoforms are produced by alternative initiation. Isoforms start at multiple alternative CUG and GUG codons.</text>
</comment>
<comment type="tissue specificity">
    <text evidence="15 20">Placenta, lung, skeletal muscle, kidney, pancreas, and intestine (PubMed:8702519). Expressed in CD34-positive hematopoietic progenitors (at protein level) (PubMed:24953180).</text>
</comment>
<comment type="similarity">
    <text evidence="24">Belongs to the dicarboxylate/amino acid:cation symporter (DAACS) (TC 2.A.23) family. SLC1A5 subfamily.</text>
</comment>
<reference key="1">
    <citation type="journal article" date="1996" name="J. Biol. Chem.">
        <title>Cloning of the sodium-dependent, broad-scope, neutral amino acid transporter Bo from a human placental choriocarcinoma cell line.</title>
        <authorList>
            <person name="Kekuda R."/>
            <person name="Prasad P.D."/>
            <person name="Fei Y.-J."/>
            <person name="Torres-Zamorano V."/>
            <person name="Sinha S."/>
            <person name="Yang-Feng T.L."/>
            <person name="Leibach F.H."/>
            <person name="Ganapathy V."/>
        </authorList>
    </citation>
    <scope>NUCLEOTIDE SEQUENCE [MRNA] (ISOFORM 1)</scope>
    <scope>FUNCTION</scope>
    <scope>SUBCELLULAR LOCATION</scope>
    <scope>TISSUE SPECIFICITY</scope>
    <source>
        <tissue>Choriocarcinoma</tissue>
    </source>
</reference>
<reference key="2">
    <citation type="journal article" date="1999" name="Proc. Natl. Acad. Sci. U.S.A.">
        <title>The RD114/simian type D retrovirus receptor is a neutral amino acid transporter.</title>
        <authorList>
            <person name="Rasko J.E.J."/>
            <person name="Battini J.L."/>
            <person name="Gottschalk R.J."/>
            <person name="Mazo I."/>
            <person name="Miller A.D."/>
        </authorList>
    </citation>
    <scope>NUCLEOTIDE SEQUENCE [MRNA] (ISOFORM 1)</scope>
    <scope>FUNCTION AS A VIRAL RECEPTOR (MICROBIAL INFECTION)</scope>
</reference>
<reference key="3">
    <citation type="journal article" date="1999" name="J. Virol.">
        <title>A sodium-dependent neutral-amino-acid transporter mediates infections of feline and baboon endogenous retroviruses and simian type D retroviruses.</title>
        <authorList>
            <person name="Tailor C.S."/>
            <person name="Nouri A."/>
            <person name="Zhao Y."/>
            <person name="Takeuchi Y."/>
            <person name="Kabat D."/>
        </authorList>
    </citation>
    <scope>NUCLEOTIDE SEQUENCE [MRNA] (ISOFORM 1)</scope>
    <scope>FUNCTION AS A VIRAL RECEPTOR (MICROBIAL INFECTION)</scope>
</reference>
<reference key="4">
    <citation type="submission" date="2009-09" db="EMBL/GenBank/DDBJ databases">
        <title>Cloning of ASCT2 cDNA from MCF-7 cells and its expression in B16 cells.</title>
        <authorList>
            <person name="Ouyang D.-Y."/>
            <person name="Xu L.-H."/>
            <person name="He X.-H."/>
            <person name="Zha Q.-B."/>
            <person name="Guo H."/>
            <person name="Gao Q."/>
            <person name="Zhang Y.-T."/>
        </authorList>
    </citation>
    <scope>NUCLEOTIDE SEQUENCE [MRNA] (ISOFORM 1)</scope>
</reference>
<reference key="5">
    <citation type="journal article" date="2004" name="Nat. Genet.">
        <title>Complete sequencing and characterization of 21,243 full-length human cDNAs.</title>
        <authorList>
            <person name="Ota T."/>
            <person name="Suzuki Y."/>
            <person name="Nishikawa T."/>
            <person name="Otsuki T."/>
            <person name="Sugiyama T."/>
            <person name="Irie R."/>
            <person name="Wakamatsu A."/>
            <person name="Hayashi K."/>
            <person name="Sato H."/>
            <person name="Nagai K."/>
            <person name="Kimura K."/>
            <person name="Makita H."/>
            <person name="Sekine M."/>
            <person name="Obayashi M."/>
            <person name="Nishi T."/>
            <person name="Shibahara T."/>
            <person name="Tanaka T."/>
            <person name="Ishii S."/>
            <person name="Yamamoto J."/>
            <person name="Saito K."/>
            <person name="Kawai Y."/>
            <person name="Isono Y."/>
            <person name="Nakamura Y."/>
            <person name="Nagahari K."/>
            <person name="Murakami K."/>
            <person name="Yasuda T."/>
            <person name="Iwayanagi T."/>
            <person name="Wagatsuma M."/>
            <person name="Shiratori A."/>
            <person name="Sudo H."/>
            <person name="Hosoiri T."/>
            <person name="Kaku Y."/>
            <person name="Kodaira H."/>
            <person name="Kondo H."/>
            <person name="Sugawara M."/>
            <person name="Takahashi M."/>
            <person name="Kanda K."/>
            <person name="Yokoi T."/>
            <person name="Furuya T."/>
            <person name="Kikkawa E."/>
            <person name="Omura Y."/>
            <person name="Abe K."/>
            <person name="Kamihara K."/>
            <person name="Katsuta N."/>
            <person name="Sato K."/>
            <person name="Tanikawa M."/>
            <person name="Yamazaki M."/>
            <person name="Ninomiya K."/>
            <person name="Ishibashi T."/>
            <person name="Yamashita H."/>
            <person name="Murakawa K."/>
            <person name="Fujimori K."/>
            <person name="Tanai H."/>
            <person name="Kimata M."/>
            <person name="Watanabe M."/>
            <person name="Hiraoka S."/>
            <person name="Chiba Y."/>
            <person name="Ishida S."/>
            <person name="Ono Y."/>
            <person name="Takiguchi S."/>
            <person name="Watanabe S."/>
            <person name="Yosida M."/>
            <person name="Hotuta T."/>
            <person name="Kusano J."/>
            <person name="Kanehori K."/>
            <person name="Takahashi-Fujii A."/>
            <person name="Hara H."/>
            <person name="Tanase T.-O."/>
            <person name="Nomura Y."/>
            <person name="Togiya S."/>
            <person name="Komai F."/>
            <person name="Hara R."/>
            <person name="Takeuchi K."/>
            <person name="Arita M."/>
            <person name="Imose N."/>
            <person name="Musashino K."/>
            <person name="Yuuki H."/>
            <person name="Oshima A."/>
            <person name="Sasaki N."/>
            <person name="Aotsuka S."/>
            <person name="Yoshikawa Y."/>
            <person name="Matsunawa H."/>
            <person name="Ichihara T."/>
            <person name="Shiohata N."/>
            <person name="Sano S."/>
            <person name="Moriya S."/>
            <person name="Momiyama H."/>
            <person name="Satoh N."/>
            <person name="Takami S."/>
            <person name="Terashima Y."/>
            <person name="Suzuki O."/>
            <person name="Nakagawa S."/>
            <person name="Senoh A."/>
            <person name="Mizoguchi H."/>
            <person name="Goto Y."/>
            <person name="Shimizu F."/>
            <person name="Wakebe H."/>
            <person name="Hishigaki H."/>
            <person name="Watanabe T."/>
            <person name="Sugiyama A."/>
            <person name="Takemoto M."/>
            <person name="Kawakami B."/>
            <person name="Yamazaki M."/>
            <person name="Watanabe K."/>
            <person name="Kumagai A."/>
            <person name="Itakura S."/>
            <person name="Fukuzumi Y."/>
            <person name="Fujimori Y."/>
            <person name="Komiyama M."/>
            <person name="Tashiro H."/>
            <person name="Tanigami A."/>
            <person name="Fujiwara T."/>
            <person name="Ono T."/>
            <person name="Yamada K."/>
            <person name="Fujii Y."/>
            <person name="Ozaki K."/>
            <person name="Hirao M."/>
            <person name="Ohmori Y."/>
            <person name="Kawabata A."/>
            <person name="Hikiji T."/>
            <person name="Kobatake N."/>
            <person name="Inagaki H."/>
            <person name="Ikema Y."/>
            <person name="Okamoto S."/>
            <person name="Okitani R."/>
            <person name="Kawakami T."/>
            <person name="Noguchi S."/>
            <person name="Itoh T."/>
            <person name="Shigeta K."/>
            <person name="Senba T."/>
            <person name="Matsumura K."/>
            <person name="Nakajima Y."/>
            <person name="Mizuno T."/>
            <person name="Morinaga M."/>
            <person name="Sasaki M."/>
            <person name="Togashi T."/>
            <person name="Oyama M."/>
            <person name="Hata H."/>
            <person name="Watanabe M."/>
            <person name="Komatsu T."/>
            <person name="Mizushima-Sugano J."/>
            <person name="Satoh T."/>
            <person name="Shirai Y."/>
            <person name="Takahashi Y."/>
            <person name="Nakagawa K."/>
            <person name="Okumura K."/>
            <person name="Nagase T."/>
            <person name="Nomura N."/>
            <person name="Kikuchi H."/>
            <person name="Masuho Y."/>
            <person name="Yamashita R."/>
            <person name="Nakai K."/>
            <person name="Yada T."/>
            <person name="Nakamura Y."/>
            <person name="Ohara O."/>
            <person name="Isogai T."/>
            <person name="Sugano S."/>
        </authorList>
    </citation>
    <scope>NUCLEOTIDE SEQUENCE [LARGE SCALE MRNA] (ISOFORMS 1; 2 AND 3)</scope>
    <scope>VARIANT LEU-512</scope>
    <source>
        <tissue>Esophagus</tissue>
        <tissue>Thymus</tissue>
    </source>
</reference>
<reference key="6">
    <citation type="journal article" date="2004" name="Nature">
        <title>The DNA sequence and biology of human chromosome 19.</title>
        <authorList>
            <person name="Grimwood J."/>
            <person name="Gordon L.A."/>
            <person name="Olsen A.S."/>
            <person name="Terry A."/>
            <person name="Schmutz J."/>
            <person name="Lamerdin J.E."/>
            <person name="Hellsten U."/>
            <person name="Goodstein D."/>
            <person name="Couronne O."/>
            <person name="Tran-Gyamfi M."/>
            <person name="Aerts A."/>
            <person name="Altherr M."/>
            <person name="Ashworth L."/>
            <person name="Bajorek E."/>
            <person name="Black S."/>
            <person name="Branscomb E."/>
            <person name="Caenepeel S."/>
            <person name="Carrano A.V."/>
            <person name="Caoile C."/>
            <person name="Chan Y.M."/>
            <person name="Christensen M."/>
            <person name="Cleland C.A."/>
            <person name="Copeland A."/>
            <person name="Dalin E."/>
            <person name="Dehal P."/>
            <person name="Denys M."/>
            <person name="Detter J.C."/>
            <person name="Escobar J."/>
            <person name="Flowers D."/>
            <person name="Fotopulos D."/>
            <person name="Garcia C."/>
            <person name="Georgescu A.M."/>
            <person name="Glavina T."/>
            <person name="Gomez M."/>
            <person name="Gonzales E."/>
            <person name="Groza M."/>
            <person name="Hammon N."/>
            <person name="Hawkins T."/>
            <person name="Haydu L."/>
            <person name="Ho I."/>
            <person name="Huang W."/>
            <person name="Israni S."/>
            <person name="Jett J."/>
            <person name="Kadner K."/>
            <person name="Kimball H."/>
            <person name="Kobayashi A."/>
            <person name="Larionov V."/>
            <person name="Leem S.-H."/>
            <person name="Lopez F."/>
            <person name="Lou Y."/>
            <person name="Lowry S."/>
            <person name="Malfatti S."/>
            <person name="Martinez D."/>
            <person name="McCready P.M."/>
            <person name="Medina C."/>
            <person name="Morgan J."/>
            <person name="Nelson K."/>
            <person name="Nolan M."/>
            <person name="Ovcharenko I."/>
            <person name="Pitluck S."/>
            <person name="Pollard M."/>
            <person name="Popkie A.P."/>
            <person name="Predki P."/>
            <person name="Quan G."/>
            <person name="Ramirez L."/>
            <person name="Rash S."/>
            <person name="Retterer J."/>
            <person name="Rodriguez A."/>
            <person name="Rogers S."/>
            <person name="Salamov A."/>
            <person name="Salazar A."/>
            <person name="She X."/>
            <person name="Smith D."/>
            <person name="Slezak T."/>
            <person name="Solovyev V."/>
            <person name="Thayer N."/>
            <person name="Tice H."/>
            <person name="Tsai M."/>
            <person name="Ustaszewska A."/>
            <person name="Vo N."/>
            <person name="Wagner M."/>
            <person name="Wheeler J."/>
            <person name="Wu K."/>
            <person name="Xie G."/>
            <person name="Yang J."/>
            <person name="Dubchak I."/>
            <person name="Furey T.S."/>
            <person name="DeJong P."/>
            <person name="Dickson M."/>
            <person name="Gordon D."/>
            <person name="Eichler E.E."/>
            <person name="Pennacchio L.A."/>
            <person name="Richardson P."/>
            <person name="Stubbs L."/>
            <person name="Rokhsar D.S."/>
            <person name="Myers R.M."/>
            <person name="Rubin E.M."/>
            <person name="Lucas S.M."/>
        </authorList>
    </citation>
    <scope>NUCLEOTIDE SEQUENCE [LARGE SCALE GENOMIC DNA]</scope>
</reference>
<reference key="7">
    <citation type="submission" date="2005-07" db="EMBL/GenBank/DDBJ databases">
        <authorList>
            <person name="Mural R.J."/>
            <person name="Istrail S."/>
            <person name="Sutton G.G."/>
            <person name="Florea L."/>
            <person name="Halpern A.L."/>
            <person name="Mobarry C.M."/>
            <person name="Lippert R."/>
            <person name="Walenz B."/>
            <person name="Shatkay H."/>
            <person name="Dew I."/>
            <person name="Miller J.R."/>
            <person name="Flanigan M.J."/>
            <person name="Edwards N.J."/>
            <person name="Bolanos R."/>
            <person name="Fasulo D."/>
            <person name="Halldorsson B.V."/>
            <person name="Hannenhalli S."/>
            <person name="Turner R."/>
            <person name="Yooseph S."/>
            <person name="Lu F."/>
            <person name="Nusskern D.R."/>
            <person name="Shue B.C."/>
            <person name="Zheng X.H."/>
            <person name="Zhong F."/>
            <person name="Delcher A.L."/>
            <person name="Huson D.H."/>
            <person name="Kravitz S.A."/>
            <person name="Mouchard L."/>
            <person name="Reinert K."/>
            <person name="Remington K.A."/>
            <person name="Clark A.G."/>
            <person name="Waterman M.S."/>
            <person name="Eichler E.E."/>
            <person name="Adams M.D."/>
            <person name="Hunkapiller M.W."/>
            <person name="Myers E.W."/>
            <person name="Venter J.C."/>
        </authorList>
    </citation>
    <scope>NUCLEOTIDE SEQUENCE [LARGE SCALE GENOMIC DNA]</scope>
</reference>
<reference key="8">
    <citation type="journal article" date="2004" name="Genome Res.">
        <title>The status, quality, and expansion of the NIH full-length cDNA project: the Mammalian Gene Collection (MGC).</title>
        <authorList>
            <consortium name="The MGC Project Team"/>
        </authorList>
    </citation>
    <scope>NUCLEOTIDE SEQUENCE [LARGE SCALE MRNA] (ISOFORM 1)</scope>
    <source>
        <tissue>Kidney</tissue>
    </source>
</reference>
<reference key="9">
    <citation type="journal article" date="2001" name="J. Biol. Chem.">
        <title>Truncated forms of the dual function human ASCT2 neutral amino acid transporter/retroviral receptor are translationally initiated at multiple alternative CUG and GUG codons.</title>
        <authorList>
            <person name="Tailor C.S."/>
            <person name="Marin M."/>
            <person name="Nouri A."/>
            <person name="Kavanaugh M.P."/>
            <person name="Kabat D."/>
        </authorList>
    </citation>
    <scope>NUCLEOTIDE SEQUENCE [MRNA] OF 14-541 (ISOFORM 1)</scope>
    <scope>ALTERNATIVE INITIATION</scope>
</reference>
<reference key="10">
    <citation type="journal article" date="2000" name="J. Virol.">
        <title>An envelope glycoprotein of the human endogenous retrovirus HERV-W is expressed in the human placenta and fuses cells expressing the type D mammalian retrovirus receptor.</title>
        <authorList>
            <person name="Blond J.-L."/>
            <person name="Lavillette D."/>
            <person name="Cheynet V."/>
            <person name="Bouton O."/>
            <person name="Oriol G."/>
            <person name="Chapel-Fernandes S."/>
            <person name="Mandrand B."/>
            <person name="Mallet F."/>
            <person name="Cosset F.-L."/>
        </authorList>
    </citation>
    <scope>FUNCTION</scope>
</reference>
<reference key="11">
    <citation type="journal article" date="2006" name="Cell">
        <title>Global, in vivo, and site-specific phosphorylation dynamics in signaling networks.</title>
        <authorList>
            <person name="Olsen J.V."/>
            <person name="Blagoev B."/>
            <person name="Gnad F."/>
            <person name="Macek B."/>
            <person name="Kumar C."/>
            <person name="Mortensen P."/>
            <person name="Mann M."/>
        </authorList>
    </citation>
    <scope>PHOSPHORYLATION [LARGE SCALE ANALYSIS] AT SER-535</scope>
    <scope>IDENTIFICATION BY MASS SPECTROMETRY [LARGE SCALE ANALYSIS]</scope>
    <source>
        <tissue>Cervix carcinoma</tissue>
    </source>
</reference>
<reference key="12">
    <citation type="journal article" date="2006" name="J. Proteome Res.">
        <title>Proteomic and bioinformatic characterization of the biogenesis and function of melanosomes.</title>
        <authorList>
            <person name="Chi A."/>
            <person name="Valencia J.C."/>
            <person name="Hu Z.-Z."/>
            <person name="Watabe H."/>
            <person name="Yamaguchi H."/>
            <person name="Mangini N.J."/>
            <person name="Huang H."/>
            <person name="Canfield V.A."/>
            <person name="Cheng K.C."/>
            <person name="Yang F."/>
            <person name="Abe R."/>
            <person name="Yamagishi S."/>
            <person name="Shabanowitz J."/>
            <person name="Hearing V.J."/>
            <person name="Wu C."/>
            <person name="Appella E."/>
            <person name="Hunt D.F."/>
        </authorList>
    </citation>
    <scope>SUBCELLULAR LOCATION [LARGE SCALE ANALYSIS]</scope>
    <source>
        <tissue>Melanoma</tissue>
    </source>
</reference>
<reference key="13">
    <citation type="journal article" date="2007" name="Exp. Eye Res.">
        <title>Functional and molecular analysis of D-serine transport in retinal Mueller cells.</title>
        <authorList>
            <person name="Dun Y."/>
            <person name="Mysona B."/>
            <person name="Itagaki S."/>
            <person name="Martin-Studdard A."/>
            <person name="Ganapathy V."/>
            <person name="Smith S.B."/>
        </authorList>
    </citation>
    <scope>FUNCTION</scope>
    <scope>TRANSPORTER ACTIVITY</scope>
</reference>
<reference key="14">
    <citation type="journal article" date="2008" name="Proc. Natl. Acad. Sci. U.S.A.">
        <title>A quantitative atlas of mitotic phosphorylation.</title>
        <authorList>
            <person name="Dephoure N."/>
            <person name="Zhou C."/>
            <person name="Villen J."/>
            <person name="Beausoleil S.A."/>
            <person name="Bakalarski C.E."/>
            <person name="Elledge S.J."/>
            <person name="Gygi S.P."/>
        </authorList>
    </citation>
    <scope>PHOSPHORYLATION [LARGE SCALE ANALYSIS] AT SER-535</scope>
    <scope>IDENTIFICATION BY MASS SPECTROMETRY [LARGE SCALE ANALYSIS]</scope>
    <source>
        <tissue>Cervix carcinoma</tissue>
    </source>
</reference>
<reference key="15">
    <citation type="journal article" date="2009" name="Anal. Chem.">
        <title>Lys-N and trypsin cover complementary parts of the phosphoproteome in a refined SCX-based approach.</title>
        <authorList>
            <person name="Gauci S."/>
            <person name="Helbig A.O."/>
            <person name="Slijper M."/>
            <person name="Krijgsveld J."/>
            <person name="Heck A.J."/>
            <person name="Mohammed S."/>
        </authorList>
    </citation>
    <scope>ACETYLATION [LARGE SCALE ANALYSIS] AT MET-1</scope>
    <scope>IDENTIFICATION BY MASS SPECTROMETRY [LARGE SCALE ANALYSIS]</scope>
</reference>
<reference key="16">
    <citation type="journal article" date="2009" name="Nat. Biotechnol.">
        <title>Mass-spectrometric identification and relative quantification of N-linked cell surface glycoproteins.</title>
        <authorList>
            <person name="Wollscheid B."/>
            <person name="Bausch-Fluck D."/>
            <person name="Henderson C."/>
            <person name="O'Brien R."/>
            <person name="Bibel M."/>
            <person name="Schiess R."/>
            <person name="Aebersold R."/>
            <person name="Watts J.D."/>
        </authorList>
    </citation>
    <scope>GLYCOSYLATION [LARGE SCALE ANALYSIS] AT ASN-212</scope>
    <source>
        <tissue>Leukemic T-cell</tissue>
    </source>
</reference>
<reference key="17">
    <citation type="journal article" date="2009" name="Sci. Signal.">
        <title>Quantitative phosphoproteomic analysis of T cell receptor signaling reveals system-wide modulation of protein-protein interactions.</title>
        <authorList>
            <person name="Mayya V."/>
            <person name="Lundgren D.H."/>
            <person name="Hwang S.-I."/>
            <person name="Rezaul K."/>
            <person name="Wu L."/>
            <person name="Eng J.K."/>
            <person name="Rodionov V."/>
            <person name="Han D.K."/>
        </authorList>
    </citation>
    <scope>PHOSPHORYLATION [LARGE SCALE ANALYSIS] AT SER-503 AND SER-535</scope>
    <scope>VARIANT [LARGE SCALE ANALYSIS] LEU-512</scope>
    <scope>IDENTIFICATION BY MASS SPECTROMETRY [LARGE SCALE ANALYSIS]</scope>
    <source>
        <tissue>Leukemic T-cell</tissue>
    </source>
</reference>
<reference key="18">
    <citation type="journal article" date="2010" name="Sci. Signal.">
        <title>Quantitative phosphoproteomics reveals widespread full phosphorylation site occupancy during mitosis.</title>
        <authorList>
            <person name="Olsen J.V."/>
            <person name="Vermeulen M."/>
            <person name="Santamaria A."/>
            <person name="Kumar C."/>
            <person name="Miller M.L."/>
            <person name="Jensen L.J."/>
            <person name="Gnad F."/>
            <person name="Cox J."/>
            <person name="Jensen T.S."/>
            <person name="Nigg E.A."/>
            <person name="Brunak S."/>
            <person name="Mann M."/>
        </authorList>
    </citation>
    <scope>PHOSPHORYLATION [LARGE SCALE ANALYSIS] AT SER-535</scope>
    <scope>IDENTIFICATION BY MASS SPECTROMETRY [LARGE SCALE ANALYSIS]</scope>
    <source>
        <tissue>Cervix carcinoma</tissue>
    </source>
</reference>
<reference key="19">
    <citation type="journal article" date="2011" name="BMC Syst. Biol.">
        <title>Initial characterization of the human central proteome.</title>
        <authorList>
            <person name="Burkard T.R."/>
            <person name="Planyavsky M."/>
            <person name="Kaupe I."/>
            <person name="Breitwieser F.P."/>
            <person name="Buerckstuemmer T."/>
            <person name="Bennett K.L."/>
            <person name="Superti-Furga G."/>
            <person name="Colinge J."/>
        </authorList>
    </citation>
    <scope>IDENTIFICATION BY MASS SPECTROMETRY [LARGE SCALE ANALYSIS]</scope>
</reference>
<reference key="20">
    <citation type="journal article" date="2011" name="Sci. Signal.">
        <title>System-wide temporal characterization of the proteome and phosphoproteome of human embryonic stem cell differentiation.</title>
        <authorList>
            <person name="Rigbolt K.T."/>
            <person name="Prokhorova T.A."/>
            <person name="Akimov V."/>
            <person name="Henningsen J."/>
            <person name="Johansen P.T."/>
            <person name="Kratchmarova I."/>
            <person name="Kassem M."/>
            <person name="Mann M."/>
            <person name="Olsen J.V."/>
            <person name="Blagoev B."/>
        </authorList>
    </citation>
    <scope>PHOSPHORYLATION [LARGE SCALE ANALYSIS] AT SER-493</scope>
    <scope>IDENTIFICATION BY MASS SPECTROMETRY [LARGE SCALE ANALYSIS]</scope>
</reference>
<reference key="21">
    <citation type="journal article" date="2012" name="Proc. Natl. Acad. Sci. U.S.A.">
        <title>N-terminal acetylome analyses and functional insights of the N-terminal acetyltransferase NatB.</title>
        <authorList>
            <person name="Van Damme P."/>
            <person name="Lasa M."/>
            <person name="Polevoda B."/>
            <person name="Gazquez C."/>
            <person name="Elosegui-Artola A."/>
            <person name="Kim D.S."/>
            <person name="De Juan-Pardo E."/>
            <person name="Demeyer K."/>
            <person name="Hole K."/>
            <person name="Larrea E."/>
            <person name="Timmerman E."/>
            <person name="Prieto J."/>
            <person name="Arnesen T."/>
            <person name="Sherman F."/>
            <person name="Gevaert K."/>
            <person name="Aldabe R."/>
        </authorList>
    </citation>
    <scope>ACETYLATION [LARGE SCALE ANALYSIS] AT MET-1</scope>
    <scope>IDENTIFICATION BY MASS SPECTROMETRY [LARGE SCALE ANALYSIS]</scope>
</reference>
<reference key="22">
    <citation type="journal article" date="2013" name="Biochim. Biophys. Acta">
        <title>Large scale production of the active human ASCT2 (SLC1A5) transporter in Pichia pastoris--functional and kinetic asymmetry revealed in proteoliposomes.</title>
        <authorList>
            <person name="Pingitore P."/>
            <person name="Pochini L."/>
            <person name="Scalise M."/>
            <person name="Galluccio M."/>
            <person name="Hedfalk K."/>
            <person name="Indiveri C."/>
        </authorList>
    </citation>
    <scope>FUNCTION</scope>
    <scope>TRANSPORTER ACTIVITY</scope>
    <scope>BIOPHYSICOCHEMICAL PROPERTIES</scope>
</reference>
<reference key="23">
    <citation type="journal article" date="2013" name="J. Proteome Res.">
        <title>Toward a comprehensive characterization of a human cancer cell phosphoproteome.</title>
        <authorList>
            <person name="Zhou H."/>
            <person name="Di Palma S."/>
            <person name="Preisinger C."/>
            <person name="Peng M."/>
            <person name="Polat A.N."/>
            <person name="Heck A.J."/>
            <person name="Mohammed S."/>
        </authorList>
    </citation>
    <scope>PHOSPHORYLATION [LARGE SCALE ANALYSIS] AT SER-493; THR-494; SER-535 AND SER-539</scope>
    <scope>IDENTIFICATION BY MASS SPECTROMETRY [LARGE SCALE ANALYSIS]</scope>
    <source>
        <tissue>Cervix carcinoma</tissue>
        <tissue>Erythroleukemia</tissue>
    </source>
</reference>
<reference key="24">
    <citation type="journal article" date="2013" name="Sci. Rep.">
        <title>A novel human endogenous retroviral protein inhibits cell-cell fusion.</title>
        <authorList>
            <person name="Sugimoto J."/>
            <person name="Sugimoto M."/>
            <person name="Bernstein H."/>
            <person name="Jinno Y."/>
            <person name="Schust D."/>
        </authorList>
    </citation>
    <scope>FUNCTION</scope>
    <scope>INTERACTION WITH ERVH48-1</scope>
    <scope>SUBCELLULAR LOCATION</scope>
</reference>
<reference key="25">
    <citation type="journal article" date="2014" name="Cell Stem Cell">
        <title>Glucose and glutamine metabolism regulate human hematopoietic stem cell lineage specification.</title>
        <authorList>
            <person name="Oburoglu L."/>
            <person name="Tardito S."/>
            <person name="Fritz V."/>
            <person name="de Barros S.C."/>
            <person name="Merida P."/>
            <person name="Craveiro M."/>
            <person name="Mamede J."/>
            <person name="Cretenet G."/>
            <person name="Mongellaz C."/>
            <person name="An X."/>
            <person name="Klysz D."/>
            <person name="Touhami J."/>
            <person name="Boyer-Clavel M."/>
            <person name="Battini J.L."/>
            <person name="Dardalhon V."/>
            <person name="Zimmermann V.S."/>
            <person name="Mohandas N."/>
            <person name="Gottlieb E."/>
            <person name="Sitbon M."/>
            <person name="Kinet S."/>
            <person name="Taylor N."/>
        </authorList>
    </citation>
    <scope>FUNCTION</scope>
    <scope>SUBCELLULAR LOCATION</scope>
    <scope>TISSUE SPECIFICITY</scope>
</reference>
<reference key="26">
    <citation type="journal article" date="2015" name="FEBS Lett.">
        <title>Cysteine is not a substrate but a specific modulator of human ASCT2 (SLC1A5) transporter.</title>
        <authorList>
            <person name="Scalise M."/>
            <person name="Pochini L."/>
            <person name="Pingitore P."/>
            <person name="Hedfalk K."/>
            <person name="Indiveri C."/>
        </authorList>
    </citation>
    <scope>FUNCTION</scope>
    <scope>TRANSPORTER ACTIVITY</scope>
    <scope>ACTIVITY REGULATION</scope>
</reference>
<reference key="27">
    <citation type="journal article" date="2020" name="Front. Cell Dev. Biol.">
        <title>The Human SLC1A5 Neutral Amino Acid Transporter Catalyzes a pH-Dependent Glutamate/Glutamine Antiport, as Well.</title>
        <authorList>
            <person name="Scalise M."/>
            <person name="Mazza T."/>
            <person name="Pappacoda G."/>
            <person name="Pochini L."/>
            <person name="Cosco J."/>
            <person name="Rovella F."/>
            <person name="Indiveri C."/>
        </authorList>
    </citation>
    <scope>FUNCTION</scope>
    <scope>TRANSPORTER ACTIVITY</scope>
</reference>
<reference key="28">
    <citation type="journal article" date="2021" name="FEBS Lett.">
        <title>The involvement of sodium in the function of the human amino acid transporter ASCT2.</title>
        <authorList>
            <person name="Mazza T."/>
            <person name="Scalise M."/>
            <person name="Pappacoda G."/>
            <person name="Pochini L."/>
            <person name="Indiveri C."/>
        </authorList>
    </citation>
    <scope>FUNCTION</scope>
    <scope>TRANSPORTER ACTIVITY</scope>
</reference>
<reference key="29">
    <citation type="journal article" date="2015" name="Proteomics">
        <title>N-terminome analysis of the human mitochondrial proteome.</title>
        <authorList>
            <person name="Vaca Jacome A.S."/>
            <person name="Rabilloud T."/>
            <person name="Schaeffer-Reiss C."/>
            <person name="Rompais M."/>
            <person name="Ayoub D."/>
            <person name="Lane L."/>
            <person name="Bairoch A."/>
            <person name="Van Dorsselaer A."/>
            <person name="Carapito C."/>
        </authorList>
    </citation>
    <scope>IDENTIFICATION BY MASS SPECTROMETRY [LARGE SCALE ANALYSIS]</scope>
</reference>
<reference key="30">
    <citation type="journal article" date="2017" name="Nature">
        <title>Structure and allosteric inhibition of excitatory amino acid transporter 1.</title>
        <authorList>
            <person name="Canul-Tec J.C."/>
            <person name="Assal R."/>
            <person name="Cirri E."/>
            <person name="Legrand P."/>
            <person name="Brier S."/>
            <person name="Chamot-Rooke J."/>
            <person name="Reyes N."/>
        </authorList>
    </citation>
    <scope>X-RAY CRYSTALLOGRAPHY (3.10 ANGSTROMS) OF 158-230</scope>
    <scope>SUBUNIT</scope>
</reference>
<reference key="31">
    <citation type="journal article" date="2018" name="Nat. Struct. Mol. Biol.">
        <title>Cryo-EM structure of the human neutral amino acid transporter ASCT2.</title>
        <authorList>
            <person name="Garaeva A.A."/>
            <person name="Oostergetel G.T."/>
            <person name="Gati C."/>
            <person name="Guskov A."/>
            <person name="Paulino C."/>
            <person name="Slotboom D.J."/>
        </authorList>
    </citation>
    <scope>STRUCTURE BY ELECTRON MICROSCOPY (3.85 ANGSTROMS)</scope>
    <scope>FUNCTION</scope>
    <scope>TRANSPORTER ACTIVITY</scope>
    <scope>BIOPHYSICOCHEMICAL PROPERTIES</scope>
    <scope>SUBCELLULAR LOCATION</scope>
    <scope>TOPOLOGY</scope>
    <scope>SUBUNIT</scope>
</reference>
<sequence>MVADPPRDSKGLAAAEPTANGGLALASIEDQGAAAGGYCGSRDQVRRCLRANLLVLLTVVAVVAGVALGLGVSGAGGALALGPERLSAFVFPGELLLRLLRMIILPLVVCSLIGGAASLDPGALGRLGAWALLFFLVTTLLASALGVGLALALQPGAASAAINASVGAAGSAENAPSKEVLDSFLDLARNIFPSNLVSAAFRSYSTTYEERNITGTRVKVPVGQEVEGMNILGLVVFAIVFGVALRKLGPEGELLIRFFNSFNEATMVLVSWIMWYAPVGIMFLVAGKIVEMEDVGLLFARLGKYILCCLLGHAIHGLLVLPLIYFLFTRKNPYRFLWGIVTPLATAFGTSSSSATLPLMMKCVEENNGVAKHISRFILPIGATVNMDGAALFQCVAAVFIAQLSQQSLDFVKIITILVTATASSVGAAGIPAGGVLTLAIILEAVNLPVDHISLILAVDWLVDRSCTVLNVEGDALGAGLLQNYVDRTESRSTEPELIQVKSELPLDPLPVPTEEGNPLLKHYRGPAGDATVASEKESVM</sequence>
<dbReference type="EMBL" id="U53347">
    <property type="protein sequence ID" value="AAC50629.1"/>
    <property type="molecule type" value="mRNA"/>
</dbReference>
<dbReference type="EMBL" id="AF102826">
    <property type="protein sequence ID" value="AAD09812.1"/>
    <property type="molecule type" value="mRNA"/>
</dbReference>
<dbReference type="EMBL" id="AF105423">
    <property type="protein sequence ID" value="AAD27806.1"/>
    <property type="molecule type" value="mRNA"/>
</dbReference>
<dbReference type="EMBL" id="GQ919058">
    <property type="protein sequence ID" value="ACX53626.1"/>
    <property type="molecule type" value="mRNA"/>
</dbReference>
<dbReference type="EMBL" id="AK292690">
    <property type="protein sequence ID" value="BAF85379.1"/>
    <property type="molecule type" value="mRNA"/>
</dbReference>
<dbReference type="EMBL" id="AK299137">
    <property type="protein sequence ID" value="BAG61189.1"/>
    <property type="molecule type" value="mRNA"/>
</dbReference>
<dbReference type="EMBL" id="AK301661">
    <property type="protein sequence ID" value="BAG63136.1"/>
    <property type="molecule type" value="mRNA"/>
</dbReference>
<dbReference type="EMBL" id="AK316546">
    <property type="protein sequence ID" value="BAH14917.1"/>
    <property type="molecule type" value="mRNA"/>
</dbReference>
<dbReference type="EMBL" id="AC008622">
    <property type="status" value="NOT_ANNOTATED_CDS"/>
    <property type="molecule type" value="Genomic_DNA"/>
</dbReference>
<dbReference type="EMBL" id="CH471126">
    <property type="protein sequence ID" value="EAW57446.1"/>
    <property type="molecule type" value="Genomic_DNA"/>
</dbReference>
<dbReference type="EMBL" id="BC000062">
    <property type="protein sequence ID" value="AAH00062.1"/>
    <property type="molecule type" value="mRNA"/>
</dbReference>
<dbReference type="EMBL" id="AF334818">
    <property type="protein sequence ID" value="AAK77026.1"/>
    <property type="molecule type" value="mRNA"/>
</dbReference>
<dbReference type="CCDS" id="CCDS12692.1">
    <molecule id="Q15758-1"/>
</dbReference>
<dbReference type="CCDS" id="CCDS46125.1">
    <molecule id="Q15758-2"/>
</dbReference>
<dbReference type="CCDS" id="CCDS46126.1">
    <molecule id="Q15758-3"/>
</dbReference>
<dbReference type="RefSeq" id="NP_001138616.1">
    <molecule id="Q15758-3"/>
    <property type="nucleotide sequence ID" value="NM_001145144.2"/>
</dbReference>
<dbReference type="RefSeq" id="NP_001138617.1">
    <molecule id="Q15758-2"/>
    <property type="nucleotide sequence ID" value="NM_001145145.2"/>
</dbReference>
<dbReference type="RefSeq" id="NP_005619.1">
    <molecule id="Q15758-1"/>
    <property type="nucleotide sequence ID" value="NM_005628.3"/>
</dbReference>
<dbReference type="PDB" id="5LLM">
    <property type="method" value="X-ray"/>
    <property type="resolution" value="3.25 A"/>
    <property type="chains" value="A=158-230"/>
</dbReference>
<dbReference type="PDB" id="5LLU">
    <property type="method" value="X-ray"/>
    <property type="resolution" value="3.32 A"/>
    <property type="chains" value="A=158-230"/>
</dbReference>
<dbReference type="PDB" id="5LM4">
    <property type="method" value="X-ray"/>
    <property type="resolution" value="3.10 A"/>
    <property type="chains" value="A=158-230"/>
</dbReference>
<dbReference type="PDB" id="5MJU">
    <property type="method" value="X-ray"/>
    <property type="resolution" value="3.71 A"/>
    <property type="chains" value="A=158-230"/>
</dbReference>
<dbReference type="PDB" id="6GCT">
    <property type="method" value="EM"/>
    <property type="resolution" value="3.85 A"/>
    <property type="chains" value="A/B/C=1-541"/>
</dbReference>
<dbReference type="PDB" id="6MP6">
    <property type="method" value="EM"/>
    <property type="resolution" value="3.54 A"/>
    <property type="chains" value="A/B/C=1-541"/>
</dbReference>
<dbReference type="PDB" id="6MPB">
    <property type="method" value="EM"/>
    <property type="resolution" value="3.84 A"/>
    <property type="chains" value="A/B/C=1-541"/>
</dbReference>
<dbReference type="PDB" id="6RVX">
    <property type="method" value="EM"/>
    <property type="resolution" value="3.61 A"/>
    <property type="chains" value="A/B/C=1-541"/>
</dbReference>
<dbReference type="PDB" id="6RVY">
    <property type="method" value="EM"/>
    <property type="resolution" value="4.13 A"/>
    <property type="chains" value="A/B/C=1-541"/>
</dbReference>
<dbReference type="PDB" id="7BCQ">
    <property type="method" value="EM"/>
    <property type="resolution" value="3.43 A"/>
    <property type="chains" value="A/B/C=1-541"/>
</dbReference>
<dbReference type="PDB" id="7BCS">
    <property type="method" value="EM"/>
    <property type="resolution" value="3.43 A"/>
    <property type="chains" value="A/B/C=1-541"/>
</dbReference>
<dbReference type="PDB" id="7BCT">
    <property type="method" value="EM"/>
    <property type="resolution" value="3.37 A"/>
    <property type="chains" value="A/B/C=1-541"/>
</dbReference>
<dbReference type="PDB" id="8OUD">
    <property type="method" value="EM"/>
    <property type="resolution" value="2.31 A"/>
    <property type="chains" value="A/B/C=1-541"/>
</dbReference>
<dbReference type="PDB" id="8OUH">
    <property type="method" value="EM"/>
    <property type="resolution" value="2.62 A"/>
    <property type="chains" value="A/B/C=1-541"/>
</dbReference>
<dbReference type="PDB" id="8OUJ">
    <property type="method" value="EM"/>
    <property type="resolution" value="3.50 A"/>
    <property type="chains" value="A/B/C=1-541"/>
</dbReference>
<dbReference type="PDB" id="8QRO">
    <property type="method" value="EM"/>
    <property type="resolution" value="2.60 A"/>
    <property type="chains" value="A/B/C=1-541"/>
</dbReference>
<dbReference type="PDB" id="8QRP">
    <property type="method" value="EM"/>
    <property type="resolution" value="2.70 A"/>
    <property type="chains" value="B=1-541"/>
</dbReference>
<dbReference type="PDB" id="8QRQ">
    <property type="method" value="EM"/>
    <property type="resolution" value="2.74 A"/>
    <property type="chains" value="B=1-541"/>
</dbReference>
<dbReference type="PDB" id="8QRR">
    <property type="method" value="EM"/>
    <property type="resolution" value="2.78 A"/>
    <property type="chains" value="B=1-541"/>
</dbReference>
<dbReference type="PDB" id="8QRS">
    <property type="method" value="EM"/>
    <property type="resolution" value="2.86 A"/>
    <property type="chains" value="B=1-541"/>
</dbReference>
<dbReference type="PDB" id="8QRU">
    <property type="method" value="EM"/>
    <property type="resolution" value="2.90 A"/>
    <property type="chains" value="B=1-541"/>
</dbReference>
<dbReference type="PDB" id="8QRV">
    <property type="method" value="EM"/>
    <property type="resolution" value="2.90 A"/>
    <property type="chains" value="B=1-541"/>
</dbReference>
<dbReference type="PDB" id="8QRW">
    <property type="method" value="EM"/>
    <property type="resolution" value="3.00 A"/>
    <property type="chains" value="B=1-541"/>
</dbReference>
<dbReference type="PDBsum" id="5LLM"/>
<dbReference type="PDBsum" id="5LLU"/>
<dbReference type="PDBsum" id="5LM4"/>
<dbReference type="PDBsum" id="5MJU"/>
<dbReference type="PDBsum" id="6GCT"/>
<dbReference type="PDBsum" id="6MP6"/>
<dbReference type="PDBsum" id="6MPB"/>
<dbReference type="PDBsum" id="6RVX"/>
<dbReference type="PDBsum" id="6RVY"/>
<dbReference type="PDBsum" id="7BCQ"/>
<dbReference type="PDBsum" id="7BCS"/>
<dbReference type="PDBsum" id="7BCT"/>
<dbReference type="PDBsum" id="8OUD"/>
<dbReference type="PDBsum" id="8OUH"/>
<dbReference type="PDBsum" id="8OUJ"/>
<dbReference type="PDBsum" id="8QRO"/>
<dbReference type="PDBsum" id="8QRP"/>
<dbReference type="PDBsum" id="8QRQ"/>
<dbReference type="PDBsum" id="8QRR"/>
<dbReference type="PDBsum" id="8QRS"/>
<dbReference type="PDBsum" id="8QRU"/>
<dbReference type="PDBsum" id="8QRV"/>
<dbReference type="PDBsum" id="8QRW"/>
<dbReference type="EMDB" id="EMD-10016"/>
<dbReference type="EMDB" id="EMD-10018"/>
<dbReference type="EMDB" id="EMD-12142"/>
<dbReference type="EMDB" id="EMD-12143"/>
<dbReference type="EMDB" id="EMD-17189"/>
<dbReference type="EMDB" id="EMD-17192"/>
<dbReference type="EMDB" id="EMD-17194"/>
<dbReference type="EMDB" id="EMD-18621"/>
<dbReference type="EMDB" id="EMD-18622"/>
<dbReference type="EMDB" id="EMD-18623"/>
<dbReference type="EMDB" id="EMD-18624"/>
<dbReference type="EMDB" id="EMD-18625"/>
<dbReference type="EMDB" id="EMD-18626"/>
<dbReference type="EMDB" id="EMD-18627"/>
<dbReference type="EMDB" id="EMD-18628"/>
<dbReference type="EMDB" id="EMD-4386"/>
<dbReference type="EMDB" id="EMD-9187"/>
<dbReference type="EMDB" id="EMD-9188"/>
<dbReference type="SMR" id="Q15758"/>
<dbReference type="BioGRID" id="112401">
    <property type="interactions" value="427"/>
</dbReference>
<dbReference type="FunCoup" id="Q15758">
    <property type="interactions" value="1104"/>
</dbReference>
<dbReference type="IntAct" id="Q15758">
    <property type="interactions" value="142"/>
</dbReference>
<dbReference type="MINT" id="Q15758"/>
<dbReference type="STRING" id="9606.ENSP00000444408"/>
<dbReference type="BindingDB" id="Q15758"/>
<dbReference type="ChEMBL" id="CHEMBL3562162"/>
<dbReference type="DrugBank" id="DB00174">
    <property type="generic name" value="Asparagine"/>
</dbReference>
<dbReference type="DrugBank" id="DB13146">
    <property type="generic name" value="Fluciclovine (18F)"/>
</dbReference>
<dbReference type="DrugBank" id="DB00130">
    <property type="generic name" value="L-Glutamine"/>
</dbReference>
<dbReference type="GuidetoPHARMACOLOGY" id="874"/>
<dbReference type="TCDB" id="2.A.23.3.3">
    <property type="family name" value="the dicarboxylate/amino acid:cation (na(+) or h(+)) symporter (daacs) family"/>
</dbReference>
<dbReference type="GlyConnect" id="1562">
    <property type="glycosylation" value="3 N-Linked glycans (1 site)"/>
</dbReference>
<dbReference type="GlyCosmos" id="Q15758">
    <property type="glycosylation" value="2 sites, 3 glycans"/>
</dbReference>
<dbReference type="GlyGen" id="Q15758">
    <property type="glycosylation" value="2 sites, 11 N-linked glycans (1 site)"/>
</dbReference>
<dbReference type="iPTMnet" id="Q15758"/>
<dbReference type="MetOSite" id="Q15758"/>
<dbReference type="PhosphoSitePlus" id="Q15758"/>
<dbReference type="SwissPalm" id="Q15758"/>
<dbReference type="BioMuta" id="SLC1A5"/>
<dbReference type="DMDM" id="21542389"/>
<dbReference type="CPTAC" id="CPTAC-2713"/>
<dbReference type="CPTAC" id="CPTAC-2714"/>
<dbReference type="jPOST" id="Q15758"/>
<dbReference type="MassIVE" id="Q15758"/>
<dbReference type="PaxDb" id="9606-ENSP00000444408"/>
<dbReference type="PeptideAtlas" id="Q15758"/>
<dbReference type="ProteomicsDB" id="19331"/>
<dbReference type="ProteomicsDB" id="5376"/>
<dbReference type="ProteomicsDB" id="60744">
    <molecule id="Q15758-1"/>
</dbReference>
<dbReference type="Pumba" id="Q15758"/>
<dbReference type="ABCD" id="Q15758">
    <property type="antibodies" value="10 sequenced antibodies"/>
</dbReference>
<dbReference type="Antibodypedia" id="18149">
    <property type="antibodies" value="309 antibodies from 35 providers"/>
</dbReference>
<dbReference type="DNASU" id="6510"/>
<dbReference type="Ensembl" id="ENST00000412532.6">
    <molecule id="Q15758-3"/>
    <property type="protein sequence ID" value="ENSP00000397924.1"/>
    <property type="gene ID" value="ENSG00000105281.13"/>
</dbReference>
<dbReference type="Ensembl" id="ENST00000434726.6">
    <molecule id="Q15758-2"/>
    <property type="protein sequence ID" value="ENSP00000406532.1"/>
    <property type="gene ID" value="ENSG00000105281.13"/>
</dbReference>
<dbReference type="Ensembl" id="ENST00000542575.6">
    <molecule id="Q15758-1"/>
    <property type="protein sequence ID" value="ENSP00000444408.1"/>
    <property type="gene ID" value="ENSG00000105281.13"/>
</dbReference>
<dbReference type="Ensembl" id="ENST00000593713.2">
    <molecule id="Q15758-3"/>
    <property type="protein sequence ID" value="ENSP00000468890.2"/>
    <property type="gene ID" value="ENSG00000105281.13"/>
</dbReference>
<dbReference type="Ensembl" id="ENST00000598022.2">
    <molecule id="Q15758-3"/>
    <property type="protein sequence ID" value="ENSP00000471626.2"/>
    <property type="gene ID" value="ENSG00000105281.13"/>
</dbReference>
<dbReference type="Ensembl" id="ENST00000713951.1">
    <molecule id="Q15758-3"/>
    <property type="protein sequence ID" value="ENSP00000519244.1"/>
    <property type="gene ID" value="ENSG00000105281.13"/>
</dbReference>
<dbReference type="GeneID" id="6510"/>
<dbReference type="KEGG" id="hsa:6510"/>
<dbReference type="MANE-Select" id="ENST00000542575.6">
    <property type="protein sequence ID" value="ENSP00000444408.1"/>
    <property type="RefSeq nucleotide sequence ID" value="NM_005628.3"/>
    <property type="RefSeq protein sequence ID" value="NP_005619.1"/>
</dbReference>
<dbReference type="UCSC" id="uc002pfr.4">
    <molecule id="Q15758-1"/>
    <property type="organism name" value="human"/>
</dbReference>
<dbReference type="AGR" id="HGNC:10943"/>
<dbReference type="CTD" id="6510"/>
<dbReference type="DisGeNET" id="6510"/>
<dbReference type="GeneCards" id="SLC1A5"/>
<dbReference type="HGNC" id="HGNC:10943">
    <property type="gene designation" value="SLC1A5"/>
</dbReference>
<dbReference type="HPA" id="ENSG00000105281">
    <property type="expression patterns" value="Low tissue specificity"/>
</dbReference>
<dbReference type="MIM" id="109190">
    <property type="type" value="gene"/>
</dbReference>
<dbReference type="neXtProt" id="NX_Q15758"/>
<dbReference type="OpenTargets" id="ENSG00000105281"/>
<dbReference type="PharmGKB" id="PA35830"/>
<dbReference type="VEuPathDB" id="HostDB:ENSG00000105281"/>
<dbReference type="eggNOG" id="KOG3787">
    <property type="taxonomic scope" value="Eukaryota"/>
</dbReference>
<dbReference type="GeneTree" id="ENSGT00940000159485"/>
<dbReference type="HOGENOM" id="CLU_019375_3_3_1"/>
<dbReference type="InParanoid" id="Q15758"/>
<dbReference type="OMA" id="VGTFYAT"/>
<dbReference type="OrthoDB" id="5877963at2759"/>
<dbReference type="PAN-GO" id="Q15758">
    <property type="GO annotations" value="4 GO annotations based on evolutionary models"/>
</dbReference>
<dbReference type="PhylomeDB" id="Q15758"/>
<dbReference type="TreeFam" id="TF315206"/>
<dbReference type="PathwayCommons" id="Q15758"/>
<dbReference type="Reactome" id="R-HSA-352230">
    <property type="pathway name" value="Amino acid transport across the plasma membrane"/>
</dbReference>
<dbReference type="Reactome" id="R-HSA-9013149">
    <property type="pathway name" value="RAC1 GTPase cycle"/>
</dbReference>
<dbReference type="Reactome" id="R-HSA-9013406">
    <property type="pathway name" value="RHOQ GTPase cycle"/>
</dbReference>
<dbReference type="Reactome" id="R-HSA-9013407">
    <property type="pathway name" value="RHOH GTPase cycle"/>
</dbReference>
<dbReference type="Reactome" id="R-HSA-9013409">
    <property type="pathway name" value="RHOJ GTPase cycle"/>
</dbReference>
<dbReference type="Reactome" id="R-HSA-9013423">
    <property type="pathway name" value="RAC3 GTPase cycle"/>
</dbReference>
<dbReference type="SignaLink" id="Q15758"/>
<dbReference type="SIGNOR" id="Q15758"/>
<dbReference type="BioGRID-ORCS" id="6510">
    <property type="hits" value="128 hits in 1185 CRISPR screens"/>
</dbReference>
<dbReference type="ChiTaRS" id="SLC1A5">
    <property type="organism name" value="human"/>
</dbReference>
<dbReference type="GeneWiki" id="SLC1A5"/>
<dbReference type="GenomeRNAi" id="6510"/>
<dbReference type="Pharos" id="Q15758">
    <property type="development level" value="Tchem"/>
</dbReference>
<dbReference type="PRO" id="PR:Q15758"/>
<dbReference type="Proteomes" id="UP000005640">
    <property type="component" value="Chromosome 19"/>
</dbReference>
<dbReference type="RNAct" id="Q15758">
    <property type="molecule type" value="protein"/>
</dbReference>
<dbReference type="Bgee" id="ENSG00000105281">
    <property type="expression patterns" value="Expressed in stromal cell of endometrium and 199 other cell types or tissues"/>
</dbReference>
<dbReference type="ExpressionAtlas" id="Q15758">
    <property type="expression patterns" value="baseline and differential"/>
</dbReference>
<dbReference type="GO" id="GO:0009925">
    <property type="term" value="C:basal plasma membrane"/>
    <property type="evidence" value="ECO:0000250"/>
    <property type="project" value="ARUK-UCL"/>
</dbReference>
<dbReference type="GO" id="GO:0034451">
    <property type="term" value="C:centriolar satellite"/>
    <property type="evidence" value="ECO:0000314"/>
    <property type="project" value="HPA"/>
</dbReference>
<dbReference type="GO" id="GO:0036064">
    <property type="term" value="C:ciliary basal body"/>
    <property type="evidence" value="ECO:0000314"/>
    <property type="project" value="HPA"/>
</dbReference>
<dbReference type="GO" id="GO:0070062">
    <property type="term" value="C:extracellular exosome"/>
    <property type="evidence" value="ECO:0007005"/>
    <property type="project" value="UniProtKB"/>
</dbReference>
<dbReference type="GO" id="GO:0042470">
    <property type="term" value="C:melanosome"/>
    <property type="evidence" value="ECO:0007669"/>
    <property type="project" value="UniProtKB-SubCell"/>
</dbReference>
<dbReference type="GO" id="GO:0016020">
    <property type="term" value="C:membrane"/>
    <property type="evidence" value="ECO:0000314"/>
    <property type="project" value="UniProtKB"/>
</dbReference>
<dbReference type="GO" id="GO:0005886">
    <property type="term" value="C:plasma membrane"/>
    <property type="evidence" value="ECO:0000314"/>
    <property type="project" value="HPA"/>
</dbReference>
<dbReference type="GO" id="GO:0015171">
    <property type="term" value="F:amino acid transmembrane transporter activity"/>
    <property type="evidence" value="ECO:0000304"/>
    <property type="project" value="Reactome"/>
</dbReference>
<dbReference type="GO" id="GO:0015297">
    <property type="term" value="F:antiporter activity"/>
    <property type="evidence" value="ECO:0000314"/>
    <property type="project" value="UniProtKB"/>
</dbReference>
<dbReference type="GO" id="GO:0015183">
    <property type="term" value="F:L-aspartate transmembrane transporter activity"/>
    <property type="evidence" value="ECO:0000250"/>
    <property type="project" value="ARUK-UCL"/>
</dbReference>
<dbReference type="GO" id="GO:0015186">
    <property type="term" value="F:L-glutamine transmembrane transporter activity"/>
    <property type="evidence" value="ECO:0000314"/>
    <property type="project" value="UniProtKB"/>
</dbReference>
<dbReference type="GO" id="GO:0015194">
    <property type="term" value="F:L-serine transmembrane transporter activity"/>
    <property type="evidence" value="ECO:0007669"/>
    <property type="project" value="Ensembl"/>
</dbReference>
<dbReference type="GO" id="GO:0022834">
    <property type="term" value="F:ligand-gated channel activity"/>
    <property type="evidence" value="ECO:0007669"/>
    <property type="project" value="Ensembl"/>
</dbReference>
<dbReference type="GO" id="GO:0046872">
    <property type="term" value="F:metal ion binding"/>
    <property type="evidence" value="ECO:0007669"/>
    <property type="project" value="UniProtKB-KW"/>
</dbReference>
<dbReference type="GO" id="GO:0015175">
    <property type="term" value="F:neutral L-amino acid transmembrane transporter activity"/>
    <property type="evidence" value="ECO:0000318"/>
    <property type="project" value="GO_Central"/>
</dbReference>
<dbReference type="GO" id="GO:0038023">
    <property type="term" value="F:signaling receptor activity"/>
    <property type="evidence" value="ECO:0000304"/>
    <property type="project" value="ProtInc"/>
</dbReference>
<dbReference type="GO" id="GO:0015293">
    <property type="term" value="F:symporter activity"/>
    <property type="evidence" value="ECO:0007669"/>
    <property type="project" value="UniProtKB-KW"/>
</dbReference>
<dbReference type="GO" id="GO:0001618">
    <property type="term" value="F:virus receptor activity"/>
    <property type="evidence" value="ECO:0007669"/>
    <property type="project" value="UniProtKB-KW"/>
</dbReference>
<dbReference type="GO" id="GO:0006865">
    <property type="term" value="P:amino acid transport"/>
    <property type="evidence" value="ECO:0000304"/>
    <property type="project" value="Reactome"/>
</dbReference>
<dbReference type="GO" id="GO:0030218">
    <property type="term" value="P:erythrocyte differentiation"/>
    <property type="evidence" value="ECO:0000315"/>
    <property type="project" value="UniProtKB"/>
</dbReference>
<dbReference type="GO" id="GO:0010585">
    <property type="term" value="P:glutamine secretion"/>
    <property type="evidence" value="ECO:0007669"/>
    <property type="project" value="Ensembl"/>
</dbReference>
<dbReference type="GO" id="GO:0006868">
    <property type="term" value="P:glutamine transport"/>
    <property type="evidence" value="ECO:0000314"/>
    <property type="project" value="UniProtKB"/>
</dbReference>
<dbReference type="GO" id="GO:0140009">
    <property type="term" value="P:L-aspartate import across plasma membrane"/>
    <property type="evidence" value="ECO:0000250"/>
    <property type="project" value="ARUK-UCL"/>
</dbReference>
<dbReference type="GO" id="GO:1903803">
    <property type="term" value="P:L-glutamine import across plasma membrane"/>
    <property type="evidence" value="ECO:0007669"/>
    <property type="project" value="Ensembl"/>
</dbReference>
<dbReference type="GO" id="GO:0015804">
    <property type="term" value="P:neutral amino acid transport"/>
    <property type="evidence" value="ECO:0000314"/>
    <property type="project" value="UniProtKB"/>
</dbReference>
<dbReference type="GO" id="GO:0070207">
    <property type="term" value="P:protein homotrimerization"/>
    <property type="evidence" value="ECO:0000314"/>
    <property type="project" value="UniProtKB"/>
</dbReference>
<dbReference type="GO" id="GO:0150104">
    <property type="term" value="P:transport across blood-brain barrier"/>
    <property type="evidence" value="ECO:0000250"/>
    <property type="project" value="ARUK-UCL"/>
</dbReference>
<dbReference type="FunFam" id="1.10.3860.10:FF:000005">
    <property type="entry name" value="Amino acid transporter"/>
    <property type="match status" value="1"/>
</dbReference>
<dbReference type="Gene3D" id="1.10.3860.10">
    <property type="entry name" value="Sodium:dicarboxylate symporter"/>
    <property type="match status" value="1"/>
</dbReference>
<dbReference type="InterPro" id="IPR050746">
    <property type="entry name" value="DAACS"/>
</dbReference>
<dbReference type="InterPro" id="IPR001991">
    <property type="entry name" value="Na-dicarboxylate_symporter"/>
</dbReference>
<dbReference type="InterPro" id="IPR018107">
    <property type="entry name" value="Na-dicarboxylate_symporter_CS"/>
</dbReference>
<dbReference type="InterPro" id="IPR036458">
    <property type="entry name" value="Na:dicarbo_symporter_sf"/>
</dbReference>
<dbReference type="PANTHER" id="PTHR11958:SF19">
    <property type="entry name" value="NEUTRAL AMINO ACID TRANSPORTER B(0)"/>
    <property type="match status" value="1"/>
</dbReference>
<dbReference type="PANTHER" id="PTHR11958">
    <property type="entry name" value="SODIUM/DICARBOXYLATE SYMPORTER-RELATED"/>
    <property type="match status" value="1"/>
</dbReference>
<dbReference type="Pfam" id="PF00375">
    <property type="entry name" value="SDF"/>
    <property type="match status" value="1"/>
</dbReference>
<dbReference type="PRINTS" id="PR00173">
    <property type="entry name" value="EDTRNSPORT"/>
</dbReference>
<dbReference type="SUPFAM" id="SSF118215">
    <property type="entry name" value="Proton glutamate symport protein"/>
    <property type="match status" value="1"/>
</dbReference>
<dbReference type="PROSITE" id="PS00713">
    <property type="entry name" value="NA_DICARBOXYL_SYMP_1"/>
    <property type="match status" value="1"/>
</dbReference>
<dbReference type="PROSITE" id="PS00714">
    <property type="entry name" value="NA_DICARBOXYL_SYMP_2"/>
    <property type="match status" value="1"/>
</dbReference>
<feature type="chain" id="PRO_0000202082" description="Neutral amino acid transporter B(0)">
    <location>
        <begin position="1"/>
        <end position="541"/>
    </location>
</feature>
<feature type="topological domain" description="Cytoplasmic" evidence="24">
    <location>
        <begin position="1"/>
        <end position="51"/>
    </location>
</feature>
<feature type="transmembrane region" description="Helical; Name=1" evidence="26">
    <location>
        <begin position="52"/>
        <end position="81"/>
    </location>
</feature>
<feature type="topological domain" description="Extracellular" evidence="24">
    <location>
        <begin position="82"/>
        <end position="94"/>
    </location>
</feature>
<feature type="transmembrane region" description="Helical; Name=2" evidence="26">
    <location>
        <begin position="95"/>
        <end position="116"/>
    </location>
</feature>
<feature type="topological domain" description="Cytoplasmic" evidence="24">
    <location>
        <begin position="117"/>
        <end position="130"/>
    </location>
</feature>
<feature type="transmembrane region" description="Helical; Name=3" evidence="26">
    <location>
        <begin position="131"/>
        <end position="153"/>
    </location>
</feature>
<feature type="topological domain" description="Extracellular" evidence="24">
    <location>
        <begin position="154"/>
        <end position="224"/>
    </location>
</feature>
<feature type="transmembrane region" description="Helical; Name=4" evidence="26">
    <location>
        <begin position="225"/>
        <end position="248"/>
    </location>
</feature>
<feature type="topological domain" description="Cytoplasmic" evidence="24">
    <location>
        <begin position="249"/>
        <end position="257"/>
    </location>
</feature>
<feature type="transmembrane region" description="Helical; Name=5" evidence="26">
    <location>
        <begin position="258"/>
        <end position="285"/>
    </location>
</feature>
<feature type="topological domain" description="Extracellular" evidence="24">
    <location>
        <begin position="286"/>
        <end position="306"/>
    </location>
</feature>
<feature type="transmembrane region" description="Helical; Name=6" evidence="26">
    <location>
        <begin position="307"/>
        <end position="328"/>
    </location>
</feature>
<feature type="topological domain" description="Cytoplasmic" evidence="24">
    <location>
        <begin position="329"/>
        <end position="333"/>
    </location>
</feature>
<feature type="intramembrane region" description="Discontinuously helical" evidence="26">
    <location>
        <begin position="334"/>
        <end position="364"/>
    </location>
</feature>
<feature type="topological domain" description="Cytoplasmic" evidence="24">
    <location>
        <begin position="365"/>
        <end position="373"/>
    </location>
</feature>
<feature type="transmembrane region" description="Helical; Name=7" evidence="26">
    <location>
        <begin position="374"/>
        <end position="400"/>
    </location>
</feature>
<feature type="topological domain" description="Extracellular" evidence="24">
    <location>
        <begin position="401"/>
        <end position="413"/>
    </location>
</feature>
<feature type="intramembrane region" description="Discontinuously helical" evidence="26">
    <location>
        <begin position="414"/>
        <end position="447"/>
    </location>
</feature>
<feature type="topological domain" description="Extracellular" evidence="24">
    <location>
        <begin position="448"/>
        <end position="460"/>
    </location>
</feature>
<feature type="transmembrane region" description="Helical; Name=8" evidence="26">
    <location>
        <begin position="461"/>
        <end position="482"/>
    </location>
</feature>
<feature type="topological domain" description="Cytoplasmic" evidence="24">
    <location>
        <begin position="483"/>
        <end position="541"/>
    </location>
</feature>
<feature type="region of interest" description="Disordered" evidence="5">
    <location>
        <begin position="511"/>
        <end position="541"/>
    </location>
</feature>
<feature type="binding site" evidence="2">
    <location>
        <position position="382"/>
    </location>
    <ligand>
        <name>Na(+)</name>
        <dbReference type="ChEBI" id="CHEBI:29101"/>
        <label>1</label>
    </ligand>
</feature>
<feature type="binding site" evidence="3">
    <location>
        <position position="384"/>
    </location>
    <ligand>
        <name>Na(+)</name>
        <dbReference type="ChEBI" id="CHEBI:29101"/>
        <label>2</label>
    </ligand>
</feature>
<feature type="binding site" evidence="2">
    <location>
        <position position="386"/>
    </location>
    <ligand>
        <name>Na(+)</name>
        <dbReference type="ChEBI" id="CHEBI:29101"/>
        <label>1</label>
    </ligand>
</feature>
<feature type="binding site" evidence="2">
    <location>
        <position position="471"/>
    </location>
    <ligand>
        <name>Na(+)</name>
        <dbReference type="ChEBI" id="CHEBI:29101"/>
        <label>1</label>
    </ligand>
</feature>
<feature type="binding site" evidence="2">
    <location>
        <position position="475"/>
    </location>
    <ligand>
        <name>Na(+)</name>
        <dbReference type="ChEBI" id="CHEBI:29101"/>
        <label>1</label>
    </ligand>
</feature>
<feature type="modified residue" description="N-acetylmethionine" evidence="29 33">
    <location>
        <position position="1"/>
    </location>
</feature>
<feature type="modified residue" description="Phosphoserine" evidence="32 34">
    <location>
        <position position="493"/>
    </location>
</feature>
<feature type="modified residue" description="Phosphothreonine" evidence="34">
    <location>
        <position position="494"/>
    </location>
</feature>
<feature type="modified residue" description="Phosphoserine" evidence="30">
    <location>
        <position position="503"/>
    </location>
</feature>
<feature type="modified residue" description="Phosphoserine" evidence="27 28 30 31 34">
    <location>
        <position position="535"/>
    </location>
</feature>
<feature type="modified residue" description="Phosphoserine" evidence="34">
    <location>
        <position position="539"/>
    </location>
</feature>
<feature type="glycosylation site" description="N-linked (GlcNAc...) asparagine" evidence="4">
    <location>
        <position position="163"/>
    </location>
</feature>
<feature type="glycosylation site" description="N-linked (GlcNAc...) asparagine" evidence="12">
    <location>
        <position position="212"/>
    </location>
</feature>
<feature type="splice variant" id="VSP_046851" description="In isoform 3." evidence="21">
    <location>
        <begin position="1"/>
        <end position="228"/>
    </location>
</feature>
<feature type="splice variant" id="VSP_046354" description="In isoform 2." evidence="21">
    <original>MVADPPRDSKGLAAAEPTANGGLALASIEDQGAAAGGYCGSRDQVRRCLRANLLVLLTVVAVVAGVALGLGVSGAGGALALGPERLSAFVFPGELLLRLLRMIILPLVVCSLIGGAASLDPGALGRLGAWALLFFLVTTLLASALGVGLALALQPGAASAAINASVGAAGSAENAPSKEVLDSFLDLARNIFPSNLVSAAFRS</original>
    <variation>M</variation>
    <location>
        <begin position="1"/>
        <end position="203"/>
    </location>
</feature>
<feature type="sequence variant" id="VAR_020439" description="In dbSNP:rs3027956.">
    <original>P</original>
    <variation>A</variation>
    <location>
        <position position="17"/>
    </location>
</feature>
<feature type="sequence variant" id="VAR_013517" description="In dbSNP:rs3027961." evidence="10 30">
    <original>V</original>
    <variation>L</variation>
    <location>
        <position position="512"/>
    </location>
</feature>
<feature type="sequence conflict" description="In Ref. 1; AAC50629." evidence="24" ref="1">
    <original>TANGGLA</original>
    <variation>PPTGAWQ</variation>
    <location>
        <begin position="18"/>
        <end position="24"/>
    </location>
</feature>
<feature type="sequence conflict" description="In Ref. 1; AAC50629." evidence="24" ref="1">
    <original>Q</original>
    <variation>L</variation>
    <location>
        <position position="44"/>
    </location>
</feature>
<feature type="sequence conflict" description="In Ref. 1; AAC50629." evidence="24" ref="1">
    <original>ERLS</original>
    <variation>GALE</variation>
    <location>
        <begin position="84"/>
        <end position="87"/>
    </location>
</feature>
<feature type="sequence conflict" description="In Ref. 5; BAH14917." evidence="24" ref="5">
    <original>V</original>
    <variation>A</variation>
    <location>
        <position position="341"/>
    </location>
</feature>
<feature type="sequence conflict" description="In Ref. 2; AAD09812." evidence="24" ref="2">
    <original>I</original>
    <variation>V</variation>
    <location>
        <position position="453"/>
    </location>
</feature>
<feature type="sequence conflict" description="In Ref. 2; AAD09812." evidence="24" ref="2">
    <original>D</original>
    <variation>G</variation>
    <location>
        <position position="460"/>
    </location>
</feature>
<feature type="sequence conflict" description="In Ref. 2; AAD09812." evidence="24" ref="2">
    <original>V</original>
    <variation>A</variation>
    <location>
        <position position="463"/>
    </location>
</feature>
<feature type="sequence conflict" description="In Ref. 2; AAD09812." evidence="24" ref="2">
    <original>D</original>
    <variation>G</variation>
    <location>
        <position position="508"/>
    </location>
</feature>
<feature type="helix" evidence="37">
    <location>
        <begin position="44"/>
        <end position="51"/>
    </location>
</feature>
<feature type="helix" evidence="36">
    <location>
        <begin position="53"/>
        <end position="74"/>
    </location>
</feature>
<feature type="helix" evidence="36">
    <location>
        <begin position="77"/>
        <end position="117"/>
    </location>
</feature>
<feature type="helix" evidence="36">
    <location>
        <begin position="121"/>
        <end position="153"/>
    </location>
</feature>
<feature type="strand" evidence="35">
    <location>
        <begin position="157"/>
        <end position="159"/>
    </location>
</feature>
<feature type="helix" evidence="35">
    <location>
        <begin position="160"/>
        <end position="162"/>
    </location>
</feature>
<feature type="helix" evidence="35">
    <location>
        <begin position="165"/>
        <end position="168"/>
    </location>
</feature>
<feature type="turn" evidence="35">
    <location>
        <begin position="169"/>
        <end position="173"/>
    </location>
</feature>
<feature type="helix" evidence="36">
    <location>
        <begin position="180"/>
        <end position="191"/>
    </location>
</feature>
<feature type="helix" evidence="36">
    <location>
        <begin position="196"/>
        <end position="199"/>
    </location>
</feature>
<feature type="strand" evidence="36">
    <location>
        <begin position="202"/>
        <end position="209"/>
    </location>
</feature>
<feature type="strand" evidence="37">
    <location>
        <begin position="214"/>
        <end position="216"/>
    </location>
</feature>
<feature type="strand" evidence="36">
    <location>
        <begin position="220"/>
        <end position="228"/>
    </location>
</feature>
<feature type="helix" evidence="36">
    <location>
        <begin position="231"/>
        <end position="248"/>
    </location>
</feature>
<feature type="helix" evidence="36">
    <location>
        <begin position="249"/>
        <end position="252"/>
    </location>
</feature>
<feature type="helix" evidence="36">
    <location>
        <begin position="253"/>
        <end position="291"/>
    </location>
</feature>
<feature type="helix" evidence="36">
    <location>
        <begin position="295"/>
        <end position="318"/>
    </location>
</feature>
<feature type="helix" evidence="36">
    <location>
        <begin position="320"/>
        <end position="329"/>
    </location>
</feature>
<feature type="helix" evidence="36">
    <location>
        <begin position="333"/>
        <end position="339"/>
    </location>
</feature>
<feature type="helix" evidence="36">
    <location>
        <begin position="341"/>
        <end position="350"/>
    </location>
</feature>
<feature type="turn" evidence="36">
    <location>
        <begin position="354"/>
        <end position="356"/>
    </location>
</feature>
<feature type="helix" evidence="36">
    <location>
        <begin position="357"/>
        <end position="368"/>
    </location>
</feature>
<feature type="helix" evidence="36">
    <location>
        <begin position="372"/>
        <end position="385"/>
    </location>
</feature>
<feature type="helix" evidence="36">
    <location>
        <begin position="388"/>
        <end position="404"/>
    </location>
</feature>
<feature type="helix" evidence="36">
    <location>
        <begin position="411"/>
        <end position="427"/>
    </location>
</feature>
<feature type="turn" evidence="36">
    <location>
        <begin position="432"/>
        <end position="435"/>
    </location>
</feature>
<feature type="helix" evidence="36">
    <location>
        <begin position="436"/>
        <end position="445"/>
    </location>
</feature>
<feature type="helix" evidence="36">
    <location>
        <begin position="450"/>
        <end position="452"/>
    </location>
</feature>
<feature type="helix" evidence="36">
    <location>
        <begin position="453"/>
        <end position="456"/>
    </location>
</feature>
<feature type="turn" evidence="36">
    <location>
        <begin position="457"/>
        <end position="459"/>
    </location>
</feature>
<feature type="helix" evidence="36">
    <location>
        <begin position="460"/>
        <end position="488"/>
    </location>
</feature>
<accession>Q15758</accession>
<accession>A8K9H5</accession>
<accession>B4DR77</accession>
<accession>B4DWS4</accession>
<accession>B7ZB81</accession>
<accession>D0EYG6</accession>
<accession>E9PC01</accession>
<accession>O95720</accession>
<accession>Q96RL9</accession>
<accession>Q9BWQ3</accession>
<accession>Q9UNP2</accession>